<reference key="1">
    <citation type="journal article" date="2011" name="Cell">
        <title>Insight into structure and assembly of the nuclear pore complex by utilizing the genome of a eukaryotic thermophile.</title>
        <authorList>
            <person name="Amlacher S."/>
            <person name="Sarges P."/>
            <person name="Flemming D."/>
            <person name="van Noort V."/>
            <person name="Kunze R."/>
            <person name="Devos D.P."/>
            <person name="Arumugam M."/>
            <person name="Bork P."/>
            <person name="Hurt E."/>
        </authorList>
    </citation>
    <scope>NUCLEOTIDE SEQUENCE [LARGE SCALE GENOMIC DNA]</scope>
    <source>
        <strain>DSM 1495 / CBS 144.50 / IMI 039719</strain>
    </source>
</reference>
<proteinExistence type="inferred from homology"/>
<evidence type="ECO:0000250" key="1">
    <source>
        <dbReference type="UniProtKB" id="Q00873"/>
    </source>
</evidence>
<evidence type="ECO:0000256" key="2">
    <source>
        <dbReference type="SAM" id="MobiDB-lite"/>
    </source>
</evidence>
<evidence type="ECO:0000305" key="3"/>
<protein>
    <recommendedName>
        <fullName evidence="1">Putative holocytochrome-c1 synthase</fullName>
        <ecNumber evidence="1">4.4.1.17</ecNumber>
    </recommendedName>
    <alternativeName>
        <fullName evidence="1">Cytochrome c1 heme lyase</fullName>
        <shortName evidence="1">CC1HL</shortName>
    </alternativeName>
</protein>
<sequence>MRGFGSDSSQASGEEAKCPVNHKTRELWLHQARAAQSASTSAAPALPQSVQVAPASQPSQPSSYSSSSWSSWLRIPFFSQQSQSANSTQQAQPPKLSAPLLDETRVISSIPRTPDATPSACPVNHEVETGASPTGHWVYPSEKQFFEAMRRKGYDPHAADMKTVVPIHNAVNERAWAEILQWEAPYVEPVSKGGCGGPRLHSFSGLGTQHMSPRARINTLLGYQAPFDRHDWVIDRCGKKIEYVIDFYAGRSDGGNAGKLNFYLDVRPKLNSWEGFKMRALRAVGLS</sequence>
<gene>
    <name type="ORF">CTHT_0020930_2</name>
</gene>
<feature type="chain" id="PRO_0000456473" description="Putative holocytochrome-c1 synthase">
    <location>
        <begin position="1"/>
        <end position="287"/>
    </location>
</feature>
<feature type="region of interest" description="Disordered" evidence="2">
    <location>
        <begin position="1"/>
        <end position="63"/>
    </location>
</feature>
<feature type="region of interest" description="Disordered" evidence="2">
    <location>
        <begin position="81"/>
        <end position="100"/>
    </location>
</feature>
<feature type="compositionally biased region" description="Polar residues" evidence="2">
    <location>
        <begin position="1"/>
        <end position="12"/>
    </location>
</feature>
<feature type="compositionally biased region" description="Low complexity" evidence="2">
    <location>
        <begin position="31"/>
        <end position="63"/>
    </location>
</feature>
<feature type="compositionally biased region" description="Low complexity" evidence="2">
    <location>
        <begin position="81"/>
        <end position="92"/>
    </location>
</feature>
<comment type="function">
    <text evidence="1">Probable lyase that catalyzes the covalent linking of the heme group to the cytochrome C apoprotein to produce the mature functional cytochrome.</text>
</comment>
<comment type="catalytic activity">
    <reaction evidence="1">
        <text>holo-[cytochrome c] = apo-[cytochrome c] + heme b</text>
        <dbReference type="Rhea" id="RHEA:22648"/>
        <dbReference type="Rhea" id="RHEA-COMP:10725"/>
        <dbReference type="Rhea" id="RHEA-COMP:10726"/>
        <dbReference type="ChEBI" id="CHEBI:29950"/>
        <dbReference type="ChEBI" id="CHEBI:60344"/>
        <dbReference type="ChEBI" id="CHEBI:83739"/>
        <dbReference type="EC" id="4.4.1.17"/>
    </reaction>
    <physiologicalReaction direction="left-to-right" evidence="1">
        <dbReference type="Rhea" id="RHEA:22649"/>
    </physiologicalReaction>
</comment>
<comment type="subcellular location">
    <subcellularLocation>
        <location evidence="1">Mitochondrion inner membrane</location>
    </subcellularLocation>
</comment>
<comment type="similarity">
    <text evidence="3">Belongs to the cytochrome c-type heme lyase family.</text>
</comment>
<comment type="sequence caution" evidence="3">
    <conflict type="erroneous gene model prediction">
        <sequence resource="EMBL-CDS" id="EGS22548"/>
    </conflict>
    <text>The predicted gene has been split into 2 genes: CTHT_0020930_1 and CTHT_0020930_2.</text>
</comment>
<name>CYT2_CHATD</name>
<keyword id="KW-0349">Heme</keyword>
<keyword id="KW-0408">Iron</keyword>
<keyword id="KW-0456">Lyase</keyword>
<keyword id="KW-0472">Membrane</keyword>
<keyword id="KW-0479">Metal-binding</keyword>
<keyword id="KW-0496">Mitochondrion</keyword>
<keyword id="KW-0999">Mitochondrion inner membrane</keyword>
<keyword id="KW-1185">Reference proteome</keyword>
<organism>
    <name type="scientific">Chaetomium thermophilum (strain DSM 1495 / CBS 144.50 / IMI 039719)</name>
    <name type="common">Thermochaetoides thermophila</name>
    <dbReference type="NCBI Taxonomy" id="759272"/>
    <lineage>
        <taxon>Eukaryota</taxon>
        <taxon>Fungi</taxon>
        <taxon>Dikarya</taxon>
        <taxon>Ascomycota</taxon>
        <taxon>Pezizomycotina</taxon>
        <taxon>Sordariomycetes</taxon>
        <taxon>Sordariomycetidae</taxon>
        <taxon>Sordariales</taxon>
        <taxon>Chaetomiaceae</taxon>
        <taxon>Thermochaetoides</taxon>
    </lineage>
</organism>
<dbReference type="EC" id="4.4.1.17" evidence="1"/>
<dbReference type="EMBL" id="GL988040">
    <property type="protein sequence ID" value="EGS22548.1"/>
    <property type="status" value="ALT_SEQ"/>
    <property type="molecule type" value="Genomic_DNA"/>
</dbReference>
<dbReference type="HOGENOM" id="CLU_723612_0_0_1"/>
<dbReference type="Proteomes" id="UP000008066">
    <property type="component" value="Unassembled WGS sequence"/>
</dbReference>
<dbReference type="GO" id="GO:0005743">
    <property type="term" value="C:mitochondrial inner membrane"/>
    <property type="evidence" value="ECO:0007669"/>
    <property type="project" value="UniProtKB-SubCell"/>
</dbReference>
<dbReference type="GO" id="GO:0004408">
    <property type="term" value="F:holocytochrome-c synthase activity"/>
    <property type="evidence" value="ECO:0007669"/>
    <property type="project" value="InterPro"/>
</dbReference>
<dbReference type="GO" id="GO:0046872">
    <property type="term" value="F:metal ion binding"/>
    <property type="evidence" value="ECO:0007669"/>
    <property type="project" value="UniProtKB-KW"/>
</dbReference>
<dbReference type="InterPro" id="IPR000511">
    <property type="entry name" value="Holocyt_c/c1_synthase"/>
</dbReference>
<dbReference type="PANTHER" id="PTHR12743">
    <property type="entry name" value="CYTOCHROME C1 HEME LYASE"/>
    <property type="match status" value="1"/>
</dbReference>
<dbReference type="PANTHER" id="PTHR12743:SF0">
    <property type="entry name" value="HOLOCYTOCHROME C-TYPE SYNTHASE"/>
    <property type="match status" value="1"/>
</dbReference>
<dbReference type="Pfam" id="PF01265">
    <property type="entry name" value="Cyto_heme_lyase"/>
    <property type="match status" value="1"/>
</dbReference>
<dbReference type="PROSITE" id="PS00822">
    <property type="entry name" value="CYTO_HEME_LYASE_2"/>
    <property type="match status" value="1"/>
</dbReference>
<accession>P9WES7</accession>
<accession>G0S3G5</accession>